<organism>
    <name type="scientific">Homo sapiens</name>
    <name type="common">Human</name>
    <dbReference type="NCBI Taxonomy" id="9606"/>
    <lineage>
        <taxon>Eukaryota</taxon>
        <taxon>Metazoa</taxon>
        <taxon>Chordata</taxon>
        <taxon>Craniata</taxon>
        <taxon>Vertebrata</taxon>
        <taxon>Euteleostomi</taxon>
        <taxon>Mammalia</taxon>
        <taxon>Eutheria</taxon>
        <taxon>Euarchontoglires</taxon>
        <taxon>Primates</taxon>
        <taxon>Haplorrhini</taxon>
        <taxon>Catarrhini</taxon>
        <taxon>Hominidae</taxon>
        <taxon>Homo</taxon>
    </lineage>
</organism>
<keyword id="KW-0002">3D-structure</keyword>
<keyword id="KW-0025">Alternative splicing</keyword>
<keyword id="KW-0175">Coiled coil</keyword>
<keyword id="KW-0968">Cytoplasmic vesicle</keyword>
<keyword id="KW-0967">Endosome</keyword>
<keyword id="KW-0446">Lipid-binding</keyword>
<keyword id="KW-0472">Membrane</keyword>
<keyword id="KW-0597">Phosphoprotein</keyword>
<keyword id="KW-0653">Protein transport</keyword>
<keyword id="KW-1267">Proteomics identification</keyword>
<keyword id="KW-1185">Reference proteome</keyword>
<keyword id="KW-0813">Transport</keyword>
<feature type="chain" id="PRO_0000211488" description="Charged multivesicular body protein 4a">
    <location>
        <begin position="1"/>
        <end position="222"/>
    </location>
</feature>
<feature type="region of interest" description="Intramolecular interaction with C-terminus" evidence="1">
    <location>
        <begin position="1"/>
        <end position="150"/>
    </location>
</feature>
<feature type="region of interest" description="Interaction with phosphoinosides">
    <location>
        <begin position="1"/>
        <end position="116"/>
    </location>
</feature>
<feature type="region of interest" description="Disordered" evidence="3">
    <location>
        <begin position="1"/>
        <end position="21"/>
    </location>
</feature>
<feature type="region of interest" description="Intramolecular interaction with N-terminus" evidence="1">
    <location>
        <begin position="151"/>
        <end position="222"/>
    </location>
</feature>
<feature type="region of interest" description="Disordered" evidence="3">
    <location>
        <begin position="180"/>
        <end position="211"/>
    </location>
</feature>
<feature type="coiled-coil region" evidence="2">
    <location>
        <begin position="20"/>
        <end position="105"/>
    </location>
</feature>
<feature type="coiled-coil region" evidence="2">
    <location>
        <begin position="155"/>
        <end position="180"/>
    </location>
</feature>
<feature type="modified residue" description="Phosphoserine" evidence="17">
    <location>
        <position position="196"/>
    </location>
</feature>
<feature type="splice variant" id="VSP_056264" description="In isoform 2." evidence="15">
    <original>M</original>
    <variation>MSRRRPEDGLGKAGPCVMRHHPPRSKAEVWRTLRGGGGRGELAM</variation>
    <location>
        <position position="1"/>
    </location>
</feature>
<feature type="sequence variant" id="VAR_023384" description="In dbSNP:rs2295322." evidence="8 10">
    <original>G</original>
    <variation>R</variation>
    <location>
        <position position="153"/>
    </location>
</feature>
<feature type="mutagenesis site" description="Membrane association; releases autoinhibition." evidence="11">
    <location>
        <begin position="182"/>
        <end position="222"/>
    </location>
</feature>
<feature type="mutagenesis site" description="Reduces interaction with PDCD6IP." evidence="13">
    <original>E</original>
    <variation>A</variation>
    <location>
        <position position="209"/>
    </location>
</feature>
<feature type="mutagenesis site" description="Abolishes interaction with PDCD6IP." evidence="13">
    <original>L</original>
    <variation>A</variation>
    <location>
        <position position="214"/>
    </location>
</feature>
<feature type="mutagenesis site" description="Abolishes interaction with PDCD6IP." evidence="13">
    <original>L</original>
    <variation>A</variation>
    <location>
        <position position="217"/>
    </location>
</feature>
<feature type="mutagenesis site" description="Abolishes interaction with PDCD6IP." evidence="13">
    <original>W</original>
    <variation>A</variation>
    <location>
        <position position="220"/>
    </location>
</feature>
<feature type="sequence conflict" description="In Ref. 4; AAF29098." evidence="16" ref="4">
    <original>G</original>
    <variation>R</variation>
    <location>
        <position position="16"/>
    </location>
</feature>
<feature type="sequence conflict" description="In Ref. 4; AAF29098." evidence="16" ref="4">
    <original>L</original>
    <variation>S</variation>
    <location>
        <position position="66"/>
    </location>
</feature>
<feature type="sequence conflict" description="In Ref. 4; AAF29098." evidence="16" ref="4">
    <original>FG</original>
    <variation>LLE</variation>
    <location>
        <begin position="152"/>
        <end position="153"/>
    </location>
</feature>
<feature type="helix" evidence="18">
    <location>
        <begin position="212"/>
        <end position="218"/>
    </location>
</feature>
<name>CHM4A_HUMAN</name>
<protein>
    <recommendedName>
        <fullName>Charged multivesicular body protein 4a</fullName>
    </recommendedName>
    <alternativeName>
        <fullName>Chromatin-modifying protein 4a</fullName>
        <shortName>CHMP4a</shortName>
    </alternativeName>
    <alternativeName>
        <fullName>SNF7 homolog associated with Alix-2</fullName>
    </alternativeName>
    <alternativeName>
        <fullName>SNF7-1</fullName>
        <shortName>hSnf-1</shortName>
    </alternativeName>
    <alternativeName>
        <fullName>Vacuolar protein sorting-associated protein 32-1</fullName>
        <shortName>Vps32-1</shortName>
        <shortName>hVps32-1</shortName>
    </alternativeName>
</protein>
<proteinExistence type="evidence at protein level"/>
<evidence type="ECO:0000250" key="1"/>
<evidence type="ECO:0000255" key="2"/>
<evidence type="ECO:0000256" key="3">
    <source>
        <dbReference type="SAM" id="MobiDB-lite"/>
    </source>
</evidence>
<evidence type="ECO:0000269" key="4">
    <source>
    </source>
</evidence>
<evidence type="ECO:0000269" key="5">
    <source>
    </source>
</evidence>
<evidence type="ECO:0000269" key="6">
    <source>
    </source>
</evidence>
<evidence type="ECO:0000269" key="7">
    <source>
    </source>
</evidence>
<evidence type="ECO:0000269" key="8">
    <source>
    </source>
</evidence>
<evidence type="ECO:0000269" key="9">
    <source>
    </source>
</evidence>
<evidence type="ECO:0000269" key="10">
    <source>
    </source>
</evidence>
<evidence type="ECO:0000269" key="11">
    <source>
    </source>
</evidence>
<evidence type="ECO:0000269" key="12">
    <source>
    </source>
</evidence>
<evidence type="ECO:0000269" key="13">
    <source>
    </source>
</evidence>
<evidence type="ECO:0000269" key="14">
    <source>
    </source>
</evidence>
<evidence type="ECO:0000303" key="15">
    <source>
    </source>
</evidence>
<evidence type="ECO:0000305" key="16"/>
<evidence type="ECO:0007744" key="17">
    <source>
    </source>
</evidence>
<evidence type="ECO:0007829" key="18">
    <source>
        <dbReference type="PDB" id="3C3O"/>
    </source>
</evidence>
<accession>Q9BY43</accession>
<accession>Q14D22</accession>
<accession>Q32Q79</accession>
<accession>Q86SZ8</accession>
<accession>Q96QJ9</accession>
<accession>Q9P026</accession>
<reference key="1">
    <citation type="journal article" date="2003" name="J. Biol. Chem.">
        <title>The ALG-2-interacting protein Alix associates with CHMP4b, a human homologue of yeast Snf7 that is involved in multivesicular body sorting.</title>
        <authorList>
            <person name="Katoh K."/>
            <person name="Shibata H."/>
            <person name="Suzuki H."/>
            <person name="Narai A."/>
            <person name="Ishidoh K."/>
            <person name="Kominami E."/>
            <person name="Yoshimori T."/>
            <person name="Maki M."/>
        </authorList>
    </citation>
    <scope>NUCLEOTIDE SEQUENCE [MRNA] (ISOFORM 1)</scope>
    <scope>FUNCTION</scope>
    <scope>SUBCELLULAR LOCATION</scope>
    <scope>INTERACTION WITH PDCD6IP</scope>
    <source>
        <tissue>Cervix</tissue>
    </source>
</reference>
<reference key="2">
    <citation type="journal article" date="2004" name="Biochem. J.">
        <title>Structure and function of human Vps20 and Snf7 proteins.</title>
        <authorList>
            <person name="Peck J.W."/>
            <person name="Bowden E.T."/>
            <person name="Burbelo P.D."/>
        </authorList>
    </citation>
    <scope>NUCLEOTIDE SEQUENCE [MRNA] (ISOFORM 1)</scope>
    <scope>VARIANT ARG-153</scope>
    <scope>FUNCTION</scope>
    <scope>SUBCELLULAR LOCATION</scope>
    <scope>INTERACTION WITH PDCD6IP</scope>
    <source>
        <tissue>Squamous cell carcinoma</tissue>
    </source>
</reference>
<reference key="3">
    <citation type="submission" date="1999-12" db="EMBL/GenBank/DDBJ databases">
        <title>A novel gene expressed in human pheochromocytoma.</title>
        <authorList>
            <person name="Li Y."/>
            <person name="Huang Q."/>
            <person name="Peng Y."/>
            <person name="Song H."/>
            <person name="Yu Y."/>
            <person name="Xu S."/>
            <person name="Ren S."/>
            <person name="Chen Z."/>
            <person name="Han Z."/>
        </authorList>
    </citation>
    <scope>NUCLEOTIDE SEQUENCE [LARGE SCALE MRNA] (ISOFORM 1)</scope>
    <source>
        <tissue>Pheochromocytoma</tissue>
    </source>
</reference>
<reference key="4">
    <citation type="journal article" date="2000" name="Genome Res.">
        <title>Cloning and functional analysis of cDNAs with open reading frames for 300 previously undefined genes expressed in CD34+ hematopoietic stem/progenitor cells.</title>
        <authorList>
            <person name="Zhang Q.-H."/>
            <person name="Ye M."/>
            <person name="Wu X.-Y."/>
            <person name="Ren S.-X."/>
            <person name="Zhao M."/>
            <person name="Zhao C.-J."/>
            <person name="Fu G."/>
            <person name="Shen Y."/>
            <person name="Fan H.-Y."/>
            <person name="Lu G."/>
            <person name="Zhong M."/>
            <person name="Xu X.-R."/>
            <person name="Han Z.-G."/>
            <person name="Zhang J.-W."/>
            <person name="Tao J."/>
            <person name="Huang Q.-H."/>
            <person name="Zhou J."/>
            <person name="Hu G.-X."/>
            <person name="Gu J."/>
            <person name="Chen S.-J."/>
            <person name="Chen Z."/>
        </authorList>
    </citation>
    <scope>NUCLEOTIDE SEQUENCE [LARGE SCALE MRNA] (ISOFORM 1)</scope>
    <source>
        <tissue>Umbilical cord blood</tissue>
    </source>
</reference>
<reference key="5">
    <citation type="submission" date="2003-02" db="EMBL/GenBank/DDBJ databases">
        <title>Full-length cDNA libraries and normalization.</title>
        <authorList>
            <person name="Li W.B."/>
            <person name="Gruber C."/>
            <person name="Jessee J."/>
            <person name="Polayes D."/>
        </authorList>
    </citation>
    <scope>NUCLEOTIDE SEQUENCE [LARGE SCALE MRNA] (ISOFORM 1)</scope>
    <source>
        <tissue>B-cell</tissue>
    </source>
</reference>
<reference key="6">
    <citation type="journal article" date="2003" name="Nature">
        <title>The DNA sequence and analysis of human chromosome 14.</title>
        <authorList>
            <person name="Heilig R."/>
            <person name="Eckenberg R."/>
            <person name="Petit J.-L."/>
            <person name="Fonknechten N."/>
            <person name="Da Silva C."/>
            <person name="Cattolico L."/>
            <person name="Levy M."/>
            <person name="Barbe V."/>
            <person name="De Berardinis V."/>
            <person name="Ureta-Vidal A."/>
            <person name="Pelletier E."/>
            <person name="Vico V."/>
            <person name="Anthouard V."/>
            <person name="Rowen L."/>
            <person name="Madan A."/>
            <person name="Qin S."/>
            <person name="Sun H."/>
            <person name="Du H."/>
            <person name="Pepin K."/>
            <person name="Artiguenave F."/>
            <person name="Robert C."/>
            <person name="Cruaud C."/>
            <person name="Bruels T."/>
            <person name="Jaillon O."/>
            <person name="Friedlander L."/>
            <person name="Samson G."/>
            <person name="Brottier P."/>
            <person name="Cure S."/>
            <person name="Segurens B."/>
            <person name="Aniere F."/>
            <person name="Samain S."/>
            <person name="Crespeau H."/>
            <person name="Abbasi N."/>
            <person name="Aiach N."/>
            <person name="Boscus D."/>
            <person name="Dickhoff R."/>
            <person name="Dors M."/>
            <person name="Dubois I."/>
            <person name="Friedman C."/>
            <person name="Gouyvenoux M."/>
            <person name="James R."/>
            <person name="Madan A."/>
            <person name="Mairey-Estrada B."/>
            <person name="Mangenot S."/>
            <person name="Martins N."/>
            <person name="Menard M."/>
            <person name="Oztas S."/>
            <person name="Ratcliffe A."/>
            <person name="Shaffer T."/>
            <person name="Trask B."/>
            <person name="Vacherie B."/>
            <person name="Bellemere C."/>
            <person name="Belser C."/>
            <person name="Besnard-Gonnet M."/>
            <person name="Bartol-Mavel D."/>
            <person name="Boutard M."/>
            <person name="Briez-Silla S."/>
            <person name="Combette S."/>
            <person name="Dufosse-Laurent V."/>
            <person name="Ferron C."/>
            <person name="Lechaplais C."/>
            <person name="Louesse C."/>
            <person name="Muselet D."/>
            <person name="Magdelenat G."/>
            <person name="Pateau E."/>
            <person name="Petit E."/>
            <person name="Sirvain-Trukniewicz P."/>
            <person name="Trybou A."/>
            <person name="Vega-Czarny N."/>
            <person name="Bataille E."/>
            <person name="Bluet E."/>
            <person name="Bordelais I."/>
            <person name="Dubois M."/>
            <person name="Dumont C."/>
            <person name="Guerin T."/>
            <person name="Haffray S."/>
            <person name="Hammadi R."/>
            <person name="Muanga J."/>
            <person name="Pellouin V."/>
            <person name="Robert D."/>
            <person name="Wunderle E."/>
            <person name="Gauguet G."/>
            <person name="Roy A."/>
            <person name="Sainte-Marthe L."/>
            <person name="Verdier J."/>
            <person name="Verdier-Discala C."/>
            <person name="Hillier L.W."/>
            <person name="Fulton L."/>
            <person name="McPherson J."/>
            <person name="Matsuda F."/>
            <person name="Wilson R."/>
            <person name="Scarpelli C."/>
            <person name="Gyapay G."/>
            <person name="Wincker P."/>
            <person name="Saurin W."/>
            <person name="Quetier F."/>
            <person name="Waterston R."/>
            <person name="Hood L."/>
            <person name="Weissenbach J."/>
        </authorList>
    </citation>
    <scope>NUCLEOTIDE SEQUENCE [LARGE SCALE GENOMIC DNA]</scope>
</reference>
<reference key="7">
    <citation type="journal article" date="2004" name="Genome Res.">
        <title>The status, quality, and expansion of the NIH full-length cDNA project: the Mammalian Gene Collection (MGC).</title>
        <authorList>
            <consortium name="The MGC Project Team"/>
        </authorList>
    </citation>
    <scope>NUCLEOTIDE SEQUENCE [LARGE SCALE MRNA] (ISOFORMS 1 AND 2)</scope>
    <scope>VARIANT ARG-153</scope>
    <source>
        <tissue>Brain</tissue>
        <tissue>Prostate</tissue>
    </source>
</reference>
<reference key="8">
    <citation type="journal article" date="2003" name="Cell">
        <title>AIP1/ALIX is a binding partner for HIV-1 p6 and EIAV p9 functioning in virus budding.</title>
        <authorList>
            <person name="Strack B."/>
            <person name="Calistri A."/>
            <person name="Craig S."/>
            <person name="Popova E."/>
            <person name="Goettlinger H.G."/>
        </authorList>
    </citation>
    <scope>FUNCTION IN HIV-1 BUDDING</scope>
    <scope>INTERACTION WITH PDCD6IP</scope>
</reference>
<reference key="9">
    <citation type="journal article" date="2003" name="Cell">
        <title>The protein network of HIV budding.</title>
        <authorList>
            <person name="von Schwedler U.K."/>
            <person name="Stuchell M."/>
            <person name="Mueller B."/>
            <person name="Ward D.M."/>
            <person name="Chung H.-Y."/>
            <person name="Morita E."/>
            <person name="Wang H.E."/>
            <person name="Davis T."/>
            <person name="He G.P."/>
            <person name="Cimbora D.M."/>
            <person name="Scott A."/>
            <person name="Kraeusslich H.-G."/>
            <person name="Kaplan J."/>
            <person name="Morham S.G."/>
            <person name="Sundquist W.I."/>
        </authorList>
    </citation>
    <scope>INTERACTION WITH CHMP4C; VPS4A AND PDCD6IP</scope>
</reference>
<reference key="10">
    <citation type="journal article" date="2003" name="Proc. Natl. Acad. Sci. U.S.A.">
        <title>Divergent retroviral late-budding domains recruit vacuolar protein sorting factors by using alternative adaptor proteins.</title>
        <authorList>
            <person name="Martin-Serrano J."/>
            <person name="Yarovoy A."/>
            <person name="Perez-Caballero D."/>
            <person name="Bieniasz P.D."/>
        </authorList>
    </citation>
    <scope>FUNCTION IN HIV-1 BUDDING</scope>
    <scope>SELF-ASSOCIATION</scope>
    <scope>INTERACTION WITH CHMP2A; CHMP4B; CHMP4C; CHMP6 AND PDCD6IP</scope>
</reference>
<reference key="11">
    <citation type="journal article" date="2003" name="Proc. Natl. Acad. Sci. U.S.A.">
        <authorList>
            <person name="Martin-Serrano J."/>
            <person name="Yarovoy A."/>
            <person name="Perez-Caballero D."/>
            <person name="Bieniasz P.D."/>
        </authorList>
    </citation>
    <scope>ERRATUM OF PUBMED:14519844</scope>
</reference>
<reference key="12">
    <citation type="journal article" date="2004" name="Arch. Biochem. Biophys.">
        <title>CHMP4b is a major binding partner of the ALG-2-interacting protein Alix among the three CHMP4 isoforms.</title>
        <authorList>
            <person name="Katoh K."/>
            <person name="Shibata H."/>
            <person name="Hatta K."/>
            <person name="Maki M."/>
        </authorList>
    </citation>
    <scope>TISSUE SPECIFICITY</scope>
    <scope>INTERACTION WITH PDCD6IP</scope>
</reference>
<reference key="13">
    <citation type="journal article" date="2005" name="J. Biol. Chem.">
        <title>Interaction of the mammalian endosomal sorting complex required for transport (ESCRT) III protein hSnf7-1 with itself, membranes, and the AAA+ ATPase SKD1.</title>
        <authorList>
            <person name="Lin Y."/>
            <person name="Kimpler L.A."/>
            <person name="Naismith T.V."/>
            <person name="Lauer J.M."/>
            <person name="Hanson P.I."/>
        </authorList>
    </citation>
    <scope>SUBCELLULAR LOCATION</scope>
    <scope>LIPID-BINDING</scope>
</reference>
<reference key="14">
    <citation type="journal article" date="2007" name="EMBO J.">
        <title>Human ESCRT and ALIX proteins interact with proteins of the midbody and function in cytokinesis.</title>
        <authorList>
            <person name="Morita E."/>
            <person name="Sandrin V."/>
            <person name="Chung H.Y."/>
            <person name="Morham S.G."/>
            <person name="Gygi S.P."/>
            <person name="Rodesch C.K."/>
            <person name="Sundquist W.I."/>
        </authorList>
    </citation>
    <scope>SUBCELLULAR LOCATION</scope>
</reference>
<reference key="15">
    <citation type="journal article" date="2007" name="Traffic">
        <title>Structure/function analysis of four core ESCRT-III proteins reveals common regulatory role for extreme C-terminal domain.</title>
        <authorList>
            <person name="Shim S."/>
            <person name="Kimpler L.A."/>
            <person name="Hanson P.I."/>
        </authorList>
    </citation>
    <scope>AUTOINHIBITORY MECHANISM</scope>
    <scope>INTERACTION WITH CHMP3</scope>
    <scope>MUTAGENESIS OF 182-ASP--SER-222</scope>
</reference>
<reference key="16">
    <citation type="journal article" date="2008" name="J. Cell Biol.">
        <title>Plasma membrane deformation by circular arrays of ESCRT-III protein filaments.</title>
        <authorList>
            <person name="Hanson P.I."/>
            <person name="Roth R."/>
            <person name="Lin Y."/>
            <person name="Heuser J.E."/>
        </authorList>
    </citation>
    <scope>FUNCTION</scope>
    <scope>SELF-ASSOCIATION</scope>
    <scope>STRUCTURE BY ELECTRON MICROSCOPY</scope>
</reference>
<reference key="17">
    <citation type="journal article" date="2012" name="Nat. Cell Biol.">
        <title>Syndecan-syntenin-ALIX regulates the biogenesis of exosomes.</title>
        <authorList>
            <person name="Baietti M.F."/>
            <person name="Zhang Z."/>
            <person name="Mortier E."/>
            <person name="Melchior A."/>
            <person name="Degeest G."/>
            <person name="Geeraerts A."/>
            <person name="Ivarsson Y."/>
            <person name="Depoortere F."/>
            <person name="Coomans C."/>
            <person name="Vermeiren E."/>
            <person name="Zimmermann P."/>
            <person name="David G."/>
        </authorList>
    </citation>
    <scope>FUNCTION</scope>
</reference>
<reference key="18">
    <citation type="journal article" date="2014" name="J. Proteomics">
        <title>An enzyme assisted RP-RPLC approach for in-depth analysis of human liver phosphoproteome.</title>
        <authorList>
            <person name="Bian Y."/>
            <person name="Song C."/>
            <person name="Cheng K."/>
            <person name="Dong M."/>
            <person name="Wang F."/>
            <person name="Huang J."/>
            <person name="Sun D."/>
            <person name="Wang L."/>
            <person name="Ye M."/>
            <person name="Zou H."/>
        </authorList>
    </citation>
    <scope>PHOSPHORYLATION [LARGE SCALE ANALYSIS] AT SER-196</scope>
    <scope>IDENTIFICATION BY MASS SPECTROMETRY [LARGE SCALE ANALYSIS]</scope>
    <source>
        <tissue>Liver</tissue>
    </source>
</reference>
<reference key="19">
    <citation type="journal article" date="2008" name="Proc. Natl. Acad. Sci. U.S.A.">
        <title>ALIX-CHMP4 interactions in the human ESCRT pathway.</title>
        <authorList>
            <person name="McCullough J."/>
            <person name="Fisher R.D."/>
            <person name="Whitby F.G."/>
            <person name="Sundquist W.I."/>
            <person name="Hill C.P."/>
        </authorList>
    </citation>
    <scope>X-RAY CRYSTALLOGRAPHY (2.15 ANGSTROMS) OF 210-222 IN COMPLEX WITH PDCD6IP</scope>
    <scope>MUTAGENESIS OF GLU-209; LEU-214; LEU-217 AND TRP-220</scope>
</reference>
<gene>
    <name type="primary">CHMP4A</name>
    <name type="synonym">C14orf123</name>
    <name type="synonym">SHAX2</name>
    <name type="ORF">CDA04</name>
    <name type="ORF">HSPC134</name>
</gene>
<comment type="function">
    <text evidence="4 5 7 8 12 14">Probable core component of the endosomal sorting required for transport complex III (ESCRT-III) which is involved in multivesicular bodies (MVBs) formation and sorting of endosomal cargo proteins into MVBs. MVBs contain intraluminal vesicles (ILVs) that are generated by invagination and scission from the limiting membrane of the endosome and mostly are delivered to lysosomes enabling degradation of membrane proteins, such as stimulated growth factor receptors, lysosomal enzymes and lipids. The MVB pathway appears to require the sequential function of ESCRT-O, -I,-II and -III complexes. ESCRT-III proteins mostly dissociate from the invaginating membrane before the ILV is released. The ESCRT machinery also functions in topologically equivalent membrane fission events, such as the terminal stages of cytokinesis and the budding of enveloped viruses (HIV-1 and other lentiviruses). ESCRT-III proteins are believed to mediate the necessary vesicle extrusion and/or membrane fission activities, possibly in conjunction with the AAA ATPase VPS4. When overexpressed, membrane-assembled circular arrays of CHMP4A filaments can promote or stabilize negative curvature and outward budding. Via its interaction with PDCD6IP involved in HIV-1 p6- and p9-dependent virus release. CHMP4A/B/C are required for the exosomal release of SDCBP, CD63 and syndecan (PubMed:22660413).</text>
</comment>
<comment type="subunit">
    <text evidence="4 5 6 7 8 9 11 13">Probable core component of the endosomal sorting required for transport complex III (ESCRT-III). ESCRT-III components are thought to multimerize to form a flat lattice on the perimeter membrane of the endosome. Several assembly forms of ESCRT-III may exist that interact and act sequentially. Self-associates; overexpression leads to the assembly of filaments that curve and associate to create circular rings. Interacts with CHMP2A. Interacts with CHMP3; the interaction requires the release of CHMP4A autoinhibition. Interacts with CHMP4B. Interacts with CHMP4C. Interacts with CHMP6. Interacts with VPS4A. Interacts with PDCD6IP; the interaction is direct.</text>
</comment>
<comment type="interaction">
    <interactant intactId="EBI-747981">
        <id>Q9BY43</id>
    </interactant>
    <interactant intactId="EBI-749627">
        <id>Q9H444</id>
        <label>CHMP4B</label>
    </interactant>
    <organismsDiffer>false</organismsDiffer>
    <experiments>4</experiments>
</comment>
<comment type="interaction">
    <interactant intactId="EBI-747981">
        <id>Q9BY43</id>
    </interactant>
    <interactant intactId="EBI-310624">
        <id>Q8WUM4</id>
        <label>PDCD6IP</label>
    </interactant>
    <organismsDiffer>false</organismsDiffer>
    <experiments>3</experiments>
</comment>
<comment type="interaction">
    <interactant intactId="EBI-747981">
        <id>Q9BY43</id>
    </interactant>
    <interactant intactId="EBI-745392">
        <id>Q9BSW7</id>
        <label>SYT17</label>
    </interactant>
    <organismsDiffer>false</organismsDiffer>
    <experiments>6</experiments>
</comment>
<comment type="interaction">
    <interactant intactId="EBI-12178895">
        <id>Q9BY43-2</id>
    </interactant>
    <interactant intactId="EBI-749627">
        <id>Q9H444</id>
        <label>CHMP4B</label>
    </interactant>
    <organismsDiffer>false</organismsDiffer>
    <experiments>3</experiments>
</comment>
<comment type="interaction">
    <interactant intactId="EBI-12178895">
        <id>Q9BY43-2</id>
    </interactant>
    <interactant intactId="EBI-741158">
        <id>Q96HA8</id>
        <label>NTAQ1</label>
    </interactant>
    <organismsDiffer>false</organismsDiffer>
    <experiments>3</experiments>
</comment>
<comment type="interaction">
    <interactant intactId="EBI-12178895">
        <id>Q9BY43-2</id>
    </interactant>
    <interactant intactId="EBI-591778">
        <id>P61970</id>
        <label>NUTF2</label>
    </interactant>
    <organismsDiffer>false</organismsDiffer>
    <experiments>3</experiments>
</comment>
<comment type="interaction">
    <interactant intactId="EBI-12178895">
        <id>Q9BY43-2</id>
    </interactant>
    <interactant intactId="EBI-745392">
        <id>Q9BSW7</id>
        <label>SYT17</label>
    </interactant>
    <organismsDiffer>false</organismsDiffer>
    <experiments>3</experiments>
</comment>
<comment type="subcellular location">
    <subcellularLocation>
        <location>Cytoplasmic vesicle membrane</location>
    </subcellularLocation>
    <subcellularLocation>
        <location evidence="16">Late endosome membrane</location>
        <topology evidence="16">Peripheral membrane protein</topology>
    </subcellularLocation>
    <text>Membrane-associated. Localizes to large vesicle-like structures. Localizes to the midbody of dividing cells. Localized in two distinct rings on either side of the Fleming body.</text>
</comment>
<comment type="alternative products">
    <event type="alternative splicing"/>
    <isoform>
        <id>Q9BY43-1</id>
        <name>1</name>
        <sequence type="displayed"/>
    </isoform>
    <isoform>
        <id>Q9BY43-2</id>
        <name>2</name>
        <sequence type="described" ref="VSP_056264"/>
    </isoform>
</comment>
<comment type="tissue specificity">
    <text evidence="9">Widely expressed. Expressed at higher level in heart, kidney, liver and skeletal muscle. Also expressed in brain, placenta, lung and pancreas.</text>
</comment>
<comment type="domain">
    <text evidence="1">The acidic C-terminus and the basic N-termminus are thought to render the protein in a closed, soluble and inactive conformation through an autoinhibitory intramolecular interaction. The open and active conformation, which enables membrane binding and oligomerization, is achieved by interaction with other cellular binding partners, probably including other ESCRT components (By similarity).</text>
</comment>
<comment type="similarity">
    <text evidence="16">Belongs to the SNF7 family.</text>
</comment>
<comment type="sequence caution" evidence="16">
    <conflict type="erroneous initiation">
        <sequence resource="EMBL-CDS" id="AAH10893"/>
    </conflict>
</comment>
<comment type="sequence caution" evidence="16">
    <conflict type="erroneous initiation">
        <sequence resource="EMBL-CDS" id="AAI07700"/>
    </conflict>
</comment>
<comment type="sequence caution" evidence="16">
    <conflict type="erroneous initiation">
        <sequence resource="EMBL-CDS" id="CAD61949"/>
    </conflict>
</comment>
<dbReference type="EMBL" id="AB100262">
    <property type="protein sequence ID" value="BAC79376.2"/>
    <property type="molecule type" value="mRNA"/>
</dbReference>
<dbReference type="EMBL" id="AY329084">
    <property type="protein sequence ID" value="AAQ91193.1"/>
    <property type="molecule type" value="mRNA"/>
</dbReference>
<dbReference type="EMBL" id="AF212243">
    <property type="protein sequence ID" value="AAK14928.1"/>
    <property type="molecule type" value="mRNA"/>
</dbReference>
<dbReference type="EMBL" id="AF161483">
    <property type="protein sequence ID" value="AAF29098.1"/>
    <property type="molecule type" value="mRNA"/>
</dbReference>
<dbReference type="EMBL" id="BX161512">
    <property type="protein sequence ID" value="CAD61949.1"/>
    <property type="status" value="ALT_INIT"/>
    <property type="molecule type" value="mRNA"/>
</dbReference>
<dbReference type="EMBL" id="AL096870">
    <property type="status" value="NOT_ANNOTATED_CDS"/>
    <property type="molecule type" value="Genomic_DNA"/>
</dbReference>
<dbReference type="EMBL" id="AL136295">
    <property type="status" value="NOT_ANNOTATED_CDS"/>
    <property type="molecule type" value="Genomic_DNA"/>
</dbReference>
<dbReference type="EMBL" id="BC010893">
    <property type="protein sequence ID" value="AAH10893.2"/>
    <property type="status" value="ALT_INIT"/>
    <property type="molecule type" value="mRNA"/>
</dbReference>
<dbReference type="EMBL" id="BC107699">
    <property type="protein sequence ID" value="AAI07700.1"/>
    <property type="status" value="ALT_INIT"/>
    <property type="molecule type" value="mRNA"/>
</dbReference>
<dbReference type="EMBL" id="BC113533">
    <property type="protein sequence ID" value="AAI13534.1"/>
    <property type="molecule type" value="mRNA"/>
</dbReference>
<dbReference type="EMBL" id="BC113535">
    <property type="protein sequence ID" value="AAI13536.1"/>
    <property type="molecule type" value="mRNA"/>
</dbReference>
<dbReference type="CCDS" id="CCDS9619.2">
    <molecule id="Q9BY43-1"/>
</dbReference>
<dbReference type="RefSeq" id="NP_054888.2">
    <molecule id="Q9BY43-1"/>
    <property type="nucleotide sequence ID" value="NM_014169.3"/>
</dbReference>
<dbReference type="PDB" id="3C3O">
    <property type="method" value="X-ray"/>
    <property type="resolution" value="2.15 A"/>
    <property type="chains" value="B=210-222"/>
</dbReference>
<dbReference type="PDB" id="5MK1">
    <property type="method" value="X-ray"/>
    <property type="resolution" value="2.50 A"/>
    <property type="chains" value="E/F/H/K=205-222"/>
</dbReference>
<dbReference type="PDBsum" id="3C3O"/>
<dbReference type="PDBsum" id="5MK1"/>
<dbReference type="SMR" id="Q9BY43"/>
<dbReference type="BioGRID" id="118852">
    <property type="interactions" value="78"/>
</dbReference>
<dbReference type="ComplexPortal" id="CPX-329">
    <property type="entry name" value="ESCRT-III complex"/>
</dbReference>
<dbReference type="CORUM" id="Q9BY43"/>
<dbReference type="DIP" id="DIP-39082N"/>
<dbReference type="FunCoup" id="Q9BY43">
    <property type="interactions" value="1728"/>
</dbReference>
<dbReference type="IntAct" id="Q9BY43">
    <property type="interactions" value="50"/>
</dbReference>
<dbReference type="MINT" id="Q9BY43"/>
<dbReference type="STRING" id="9606.ENSP00000476412"/>
<dbReference type="GlyGen" id="Q9BY43">
    <property type="glycosylation" value="1 site"/>
</dbReference>
<dbReference type="iPTMnet" id="Q9BY43"/>
<dbReference type="PhosphoSitePlus" id="Q9BY43"/>
<dbReference type="BioMuta" id="CHMP4A"/>
<dbReference type="DMDM" id="90152096"/>
<dbReference type="jPOST" id="Q9BY43"/>
<dbReference type="MassIVE" id="Q9BY43"/>
<dbReference type="PaxDb" id="9606-ENSP00000324205"/>
<dbReference type="PeptideAtlas" id="Q9BY43"/>
<dbReference type="ProteomicsDB" id="60344"/>
<dbReference type="ProteomicsDB" id="79580">
    <molecule id="Q9BY43-1"/>
</dbReference>
<dbReference type="Pumba" id="Q9BY43"/>
<dbReference type="Antibodypedia" id="56042">
    <property type="antibodies" value="38 antibodies from 14 providers"/>
</dbReference>
<dbReference type="DNASU" id="29082"/>
<dbReference type="Ensembl" id="ENST00000347519.12">
    <molecule id="Q9BY43-1"/>
    <property type="protein sequence ID" value="ENSP00000324205.11"/>
    <property type="gene ID" value="ENSG00000254505.11"/>
</dbReference>
<dbReference type="Ensembl" id="ENST00000645308.4">
    <molecule id="Q9BY43-1"/>
    <property type="protein sequence ID" value="ENSP00000495982.2"/>
    <property type="gene ID" value="ENSG00000285302.5"/>
</dbReference>
<dbReference type="GeneID" id="29082"/>
<dbReference type="KEGG" id="hsa:29082"/>
<dbReference type="MANE-Select" id="ENST00000347519.12">
    <property type="protein sequence ID" value="ENSP00000324205.11"/>
    <property type="RefSeq nucleotide sequence ID" value="NM_014169.5"/>
    <property type="RefSeq protein sequence ID" value="NP_054888.3"/>
</dbReference>
<dbReference type="UCSC" id="uc001wni.4">
    <molecule id="Q9BY43-1"/>
    <property type="organism name" value="human"/>
</dbReference>
<dbReference type="AGR" id="HGNC:20274"/>
<dbReference type="CTD" id="29082"/>
<dbReference type="DisGeNET" id="29082"/>
<dbReference type="GeneCards" id="CHMP4A"/>
<dbReference type="HGNC" id="HGNC:20274">
    <property type="gene designation" value="CHMP4A"/>
</dbReference>
<dbReference type="HPA" id="ENSG00000254505">
    <property type="expression patterns" value="Low tissue specificity"/>
</dbReference>
<dbReference type="MIM" id="610051">
    <property type="type" value="gene"/>
</dbReference>
<dbReference type="neXtProt" id="NX_Q9BY43"/>
<dbReference type="OpenTargets" id="ENSG00000254505"/>
<dbReference type="PharmGKB" id="PA134888743"/>
<dbReference type="VEuPathDB" id="HostDB:ENSG00000254505"/>
<dbReference type="eggNOG" id="KOG1656">
    <property type="taxonomic scope" value="Eukaryota"/>
</dbReference>
<dbReference type="GeneTree" id="ENSGT00940000163323"/>
<dbReference type="HOGENOM" id="CLU_071097_0_1_1"/>
<dbReference type="InParanoid" id="Q9BY43"/>
<dbReference type="OMA" id="RCPKEGL"/>
<dbReference type="OrthoDB" id="5592979at2759"/>
<dbReference type="PAN-GO" id="Q9BY43">
    <property type="GO annotations" value="5 GO annotations based on evolutionary models"/>
</dbReference>
<dbReference type="PhylomeDB" id="Q9BY43"/>
<dbReference type="TreeFam" id="TF314269"/>
<dbReference type="PathwayCommons" id="Q9BY43"/>
<dbReference type="Reactome" id="R-HSA-162588">
    <property type="pathway name" value="Budding and maturation of HIV virion"/>
</dbReference>
<dbReference type="Reactome" id="R-HSA-1632852">
    <property type="pathway name" value="Macroautophagy"/>
</dbReference>
<dbReference type="Reactome" id="R-HSA-5620971">
    <property type="pathway name" value="Pyroptosis"/>
</dbReference>
<dbReference type="Reactome" id="R-HSA-917729">
    <property type="pathway name" value="Endosomal Sorting Complex Required For Transport (ESCRT)"/>
</dbReference>
<dbReference type="Reactome" id="R-HSA-9610379">
    <property type="pathway name" value="HCMV Late Events"/>
</dbReference>
<dbReference type="Reactome" id="R-HSA-9615710">
    <property type="pathway name" value="Late endosomal microautophagy"/>
</dbReference>
<dbReference type="Reactome" id="R-HSA-9668328">
    <property type="pathway name" value="Sealing of the nuclear envelope (NE) by ESCRT-III"/>
</dbReference>
<dbReference type="Reactome" id="R-HSA-9679504">
    <property type="pathway name" value="Translation of Replicase and Assembly of the Replication Transcription Complex"/>
</dbReference>
<dbReference type="Reactome" id="R-HSA-9694676">
    <property type="pathway name" value="Translation of Replicase and Assembly of the Replication Transcription Complex"/>
</dbReference>
<dbReference type="SignaLink" id="Q9BY43"/>
<dbReference type="SIGNOR" id="Q9BY43"/>
<dbReference type="BioGRID-ORCS" id="29082">
    <property type="hits" value="11 hits in 1153 CRISPR screens"/>
</dbReference>
<dbReference type="ChiTaRS" id="CHMP4A">
    <property type="organism name" value="human"/>
</dbReference>
<dbReference type="EvolutionaryTrace" id="Q9BY43"/>
<dbReference type="GeneWiki" id="CHMP4A"/>
<dbReference type="GenomeRNAi" id="29082"/>
<dbReference type="Pharos" id="Q9BY43">
    <property type="development level" value="Tbio"/>
</dbReference>
<dbReference type="PRO" id="PR:Q9BY43"/>
<dbReference type="Proteomes" id="UP000005640">
    <property type="component" value="Chromosome 14"/>
</dbReference>
<dbReference type="RNAct" id="Q9BY43">
    <property type="molecule type" value="protein"/>
</dbReference>
<dbReference type="Bgee" id="ENSG00000254505">
    <property type="expression patterns" value="Expressed in popliteal artery and 100 other cell types or tissues"/>
</dbReference>
<dbReference type="ExpressionAtlas" id="Q9BY43">
    <property type="expression patterns" value="baseline and differential"/>
</dbReference>
<dbReference type="GO" id="GO:1904930">
    <property type="term" value="C:amphisome membrane"/>
    <property type="evidence" value="ECO:0000314"/>
    <property type="project" value="ComplexPortal"/>
</dbReference>
<dbReference type="GO" id="GO:0000421">
    <property type="term" value="C:autophagosome membrane"/>
    <property type="evidence" value="ECO:0000314"/>
    <property type="project" value="ComplexPortal"/>
</dbReference>
<dbReference type="GO" id="GO:0005737">
    <property type="term" value="C:cytoplasm"/>
    <property type="evidence" value="ECO:0000314"/>
    <property type="project" value="UniProtKB"/>
</dbReference>
<dbReference type="GO" id="GO:0009898">
    <property type="term" value="C:cytoplasmic side of plasma membrane"/>
    <property type="evidence" value="ECO:0000314"/>
    <property type="project" value="UniProtKB"/>
</dbReference>
<dbReference type="GO" id="GO:0005829">
    <property type="term" value="C:cytosol"/>
    <property type="evidence" value="ECO:0000304"/>
    <property type="project" value="Reactome"/>
</dbReference>
<dbReference type="GO" id="GO:0000815">
    <property type="term" value="C:ESCRT III complex"/>
    <property type="evidence" value="ECO:0000314"/>
    <property type="project" value="UniProtKB"/>
</dbReference>
<dbReference type="GO" id="GO:0000776">
    <property type="term" value="C:kinetochore"/>
    <property type="evidence" value="ECO:0000314"/>
    <property type="project" value="ComplexPortal"/>
</dbReference>
<dbReference type="GO" id="GO:0005828">
    <property type="term" value="C:kinetochore microtubule"/>
    <property type="evidence" value="ECO:0000314"/>
    <property type="project" value="ComplexPortal"/>
</dbReference>
<dbReference type="GO" id="GO:0005765">
    <property type="term" value="C:lysosomal membrane"/>
    <property type="evidence" value="ECO:0000314"/>
    <property type="project" value="ComplexPortal"/>
</dbReference>
<dbReference type="GO" id="GO:0030117">
    <property type="term" value="C:membrane coat"/>
    <property type="evidence" value="ECO:0000315"/>
    <property type="project" value="UniProtKB"/>
</dbReference>
<dbReference type="GO" id="GO:0030496">
    <property type="term" value="C:midbody"/>
    <property type="evidence" value="ECO:0000314"/>
    <property type="project" value="FlyBase"/>
</dbReference>
<dbReference type="GO" id="GO:0005771">
    <property type="term" value="C:multivesicular body"/>
    <property type="evidence" value="ECO:0000318"/>
    <property type="project" value="GO_Central"/>
</dbReference>
<dbReference type="GO" id="GO:0032585">
    <property type="term" value="C:multivesicular body membrane"/>
    <property type="evidence" value="ECO:0000314"/>
    <property type="project" value="ComplexPortal"/>
</dbReference>
<dbReference type="GO" id="GO:0005643">
    <property type="term" value="C:nuclear pore"/>
    <property type="evidence" value="ECO:0000314"/>
    <property type="project" value="ComplexPortal"/>
</dbReference>
<dbReference type="GO" id="GO:0005634">
    <property type="term" value="C:nucleus"/>
    <property type="evidence" value="ECO:0000314"/>
    <property type="project" value="UniProtKB"/>
</dbReference>
<dbReference type="GO" id="GO:0005886">
    <property type="term" value="C:plasma membrane"/>
    <property type="evidence" value="ECO:0000314"/>
    <property type="project" value="ComplexPortal"/>
</dbReference>
<dbReference type="GO" id="GO:0051117">
    <property type="term" value="F:ATPase binding"/>
    <property type="evidence" value="ECO:0000353"/>
    <property type="project" value="UniProtKB"/>
</dbReference>
<dbReference type="GO" id="GO:0042802">
    <property type="term" value="F:identical protein binding"/>
    <property type="evidence" value="ECO:0000353"/>
    <property type="project" value="UniProtKB"/>
</dbReference>
<dbReference type="GO" id="GO:0008289">
    <property type="term" value="F:lipid binding"/>
    <property type="evidence" value="ECO:0007669"/>
    <property type="project" value="UniProtKB-KW"/>
</dbReference>
<dbReference type="GO" id="GO:0042803">
    <property type="term" value="F:protein homodimerization activity"/>
    <property type="evidence" value="ECO:0000353"/>
    <property type="project" value="UniProtKB"/>
</dbReference>
<dbReference type="GO" id="GO:0097352">
    <property type="term" value="P:autophagosome maturation"/>
    <property type="evidence" value="ECO:0000315"/>
    <property type="project" value="ComplexPortal"/>
</dbReference>
<dbReference type="GO" id="GO:0006914">
    <property type="term" value="P:autophagy"/>
    <property type="evidence" value="ECO:0000315"/>
    <property type="project" value="ComplexPortal"/>
</dbReference>
<dbReference type="GO" id="GO:1902774">
    <property type="term" value="P:late endosome to lysosome transport"/>
    <property type="evidence" value="ECO:0000315"/>
    <property type="project" value="ComplexPortal"/>
</dbReference>
<dbReference type="GO" id="GO:0032511">
    <property type="term" value="P:late endosome to vacuole transport via multivesicular body sorting pathway"/>
    <property type="evidence" value="ECO:0000318"/>
    <property type="project" value="GO_Central"/>
</dbReference>
<dbReference type="GO" id="GO:0016236">
    <property type="term" value="P:macroautophagy"/>
    <property type="evidence" value="ECO:0000304"/>
    <property type="project" value="ParkinsonsUK-UCL"/>
</dbReference>
<dbReference type="GO" id="GO:0090148">
    <property type="term" value="P:membrane fission"/>
    <property type="evidence" value="ECO:0000303"/>
    <property type="project" value="ComplexPortal"/>
</dbReference>
<dbReference type="GO" id="GO:0010324">
    <property type="term" value="P:membrane invagination"/>
    <property type="evidence" value="ECO:0000315"/>
    <property type="project" value="UniProtKB"/>
</dbReference>
<dbReference type="GO" id="GO:0061952">
    <property type="term" value="P:midbody abscission"/>
    <property type="evidence" value="ECO:0000315"/>
    <property type="project" value="UniProtKB"/>
</dbReference>
<dbReference type="GO" id="GO:0007080">
    <property type="term" value="P:mitotic metaphase chromosome alignment"/>
    <property type="evidence" value="ECO:0000315"/>
    <property type="project" value="UniProtKB"/>
</dbReference>
<dbReference type="GO" id="GO:0036258">
    <property type="term" value="P:multivesicular body assembly"/>
    <property type="evidence" value="ECO:0000304"/>
    <property type="project" value="ParkinsonsUK-UCL"/>
</dbReference>
<dbReference type="GO" id="GO:0071985">
    <property type="term" value="P:multivesicular body sorting pathway"/>
    <property type="evidence" value="ECO:0000314"/>
    <property type="project" value="ComplexPortal"/>
</dbReference>
<dbReference type="GO" id="GO:0061763">
    <property type="term" value="P:multivesicular body-lysosome fusion"/>
    <property type="evidence" value="ECO:0000303"/>
    <property type="project" value="ComplexPortal"/>
</dbReference>
<dbReference type="GO" id="GO:0050877">
    <property type="term" value="P:nervous system process"/>
    <property type="evidence" value="ECO:0000315"/>
    <property type="project" value="UniProtKB"/>
</dbReference>
<dbReference type="GO" id="GO:0031468">
    <property type="term" value="P:nuclear membrane reassembly"/>
    <property type="evidence" value="ECO:0000315"/>
    <property type="project" value="ComplexPortal"/>
</dbReference>
<dbReference type="GO" id="GO:0006997">
    <property type="term" value="P:nucleus organization"/>
    <property type="evidence" value="ECO:0000315"/>
    <property type="project" value="UniProtKB"/>
</dbReference>
<dbReference type="GO" id="GO:0001778">
    <property type="term" value="P:plasma membrane repair"/>
    <property type="evidence" value="ECO:0000314"/>
    <property type="project" value="ComplexPortal"/>
</dbReference>
<dbReference type="GO" id="GO:0097320">
    <property type="term" value="P:plasma membrane tubulation"/>
    <property type="evidence" value="ECO:0000315"/>
    <property type="project" value="UniProtKB"/>
</dbReference>
<dbReference type="GO" id="GO:0006620">
    <property type="term" value="P:post-translational protein targeting to endoplasmic reticulum membrane"/>
    <property type="evidence" value="ECO:0000315"/>
    <property type="project" value="UniProtKB"/>
</dbReference>
<dbReference type="GO" id="GO:0051258">
    <property type="term" value="P:protein polymerization"/>
    <property type="evidence" value="ECO:0000315"/>
    <property type="project" value="UniProtKB"/>
</dbReference>
<dbReference type="GO" id="GO:0015031">
    <property type="term" value="P:protein transport"/>
    <property type="evidence" value="ECO:0007669"/>
    <property type="project" value="UniProtKB-KW"/>
</dbReference>
<dbReference type="GO" id="GO:1901673">
    <property type="term" value="P:regulation of mitotic spindle assembly"/>
    <property type="evidence" value="ECO:0000315"/>
    <property type="project" value="ComplexPortal"/>
</dbReference>
<dbReference type="GO" id="GO:0043162">
    <property type="term" value="P:ubiquitin-dependent protein catabolic process via the multivesicular body sorting pathway"/>
    <property type="evidence" value="ECO:0000314"/>
    <property type="project" value="ComplexPortal"/>
</dbReference>
<dbReference type="GO" id="GO:0006900">
    <property type="term" value="P:vesicle budding from membrane"/>
    <property type="evidence" value="ECO:0000315"/>
    <property type="project" value="UniProtKB"/>
</dbReference>
<dbReference type="GO" id="GO:0051469">
    <property type="term" value="P:vesicle fusion with vacuole"/>
    <property type="evidence" value="ECO:0000303"/>
    <property type="project" value="ComplexPortal"/>
</dbReference>
<dbReference type="GO" id="GO:0046761">
    <property type="term" value="P:viral budding from plasma membrane"/>
    <property type="evidence" value="ECO:0000314"/>
    <property type="project" value="ComplexPortal"/>
</dbReference>
<dbReference type="GO" id="GO:0039702">
    <property type="term" value="P:viral budding via host ESCRT complex"/>
    <property type="evidence" value="ECO:0000314"/>
    <property type="project" value="UniProtKB"/>
</dbReference>
<dbReference type="FunFam" id="1.10.287.1060:FF:000001">
    <property type="entry name" value="Charged multivesicular body protein 4b"/>
    <property type="match status" value="1"/>
</dbReference>
<dbReference type="Gene3D" id="6.10.250.1710">
    <property type="match status" value="1"/>
</dbReference>
<dbReference type="Gene3D" id="1.10.287.1060">
    <property type="entry name" value="ESAT-6-like"/>
    <property type="match status" value="1"/>
</dbReference>
<dbReference type="InterPro" id="IPR005024">
    <property type="entry name" value="Snf7_fam"/>
</dbReference>
<dbReference type="PANTHER" id="PTHR22761">
    <property type="entry name" value="CHARGED MULTIVESICULAR BODY PROTEIN"/>
    <property type="match status" value="1"/>
</dbReference>
<dbReference type="PANTHER" id="PTHR22761:SF14">
    <property type="entry name" value="CHARGED MULTIVESICULAR BODY PROTEIN 4A"/>
    <property type="match status" value="1"/>
</dbReference>
<dbReference type="Pfam" id="PF03357">
    <property type="entry name" value="Snf7"/>
    <property type="match status" value="1"/>
</dbReference>
<sequence>MSGLGRLFGKGKKEKGPTPEEAIQKLKETEKILIKKQEFLEQKIQQELQTAKKYGTKNKRAALQALRRKKRFEQQLAQTDGTLSTLEFQREAIENATTNAEVLRTMELAAQSMKKAYQDMDIDKVDELMTDITEQQEVAQQISDAISRPMGFGDDVDEDELLEELEELEQEELAQELLNVGDKEEEPSVKLPSVPSTHLPAGPAPKVDEDEEALKQLAEWVS</sequence>